<reference key="1">
    <citation type="journal article" date="2004" name="Proc. Natl. Acad. Sci. U.S.A.">
        <title>Comparison of the genome of the oral pathogen Treponema denticola with other spirochete genomes.</title>
        <authorList>
            <person name="Seshadri R."/>
            <person name="Myers G.S.A."/>
            <person name="Tettelin H."/>
            <person name="Eisen J.A."/>
            <person name="Heidelberg J.F."/>
            <person name="Dodson R.J."/>
            <person name="Davidsen T.M."/>
            <person name="DeBoy R.T."/>
            <person name="Fouts D.E."/>
            <person name="Haft D.H."/>
            <person name="Selengut J."/>
            <person name="Ren Q."/>
            <person name="Brinkac L.M."/>
            <person name="Madupu R."/>
            <person name="Kolonay J.F."/>
            <person name="Durkin S.A."/>
            <person name="Daugherty S.C."/>
            <person name="Shetty J."/>
            <person name="Shvartsbeyn A."/>
            <person name="Gebregeorgis E."/>
            <person name="Geer K."/>
            <person name="Tsegaye G."/>
            <person name="Malek J.A."/>
            <person name="Ayodeji B."/>
            <person name="Shatsman S."/>
            <person name="McLeod M.P."/>
            <person name="Smajs D."/>
            <person name="Howell J.K."/>
            <person name="Pal S."/>
            <person name="Amin A."/>
            <person name="Vashisth P."/>
            <person name="McNeill T.Z."/>
            <person name="Xiang Q."/>
            <person name="Sodergren E."/>
            <person name="Baca E."/>
            <person name="Weinstock G.M."/>
            <person name="Norris S.J."/>
            <person name="Fraser C.M."/>
            <person name="Paulsen I.T."/>
        </authorList>
    </citation>
    <scope>NUCLEOTIDE SEQUENCE [LARGE SCALE GENOMIC DNA]</scope>
    <source>
        <strain>ATCC 35405 / DSM 14222 / CIP 103919 / JCM 8153 / KCTC 15104</strain>
    </source>
</reference>
<sequence>MAIKQPKGKTVRRLGVNIYGNPKYDKLLDRKPNGPGKERGARKRGKTSVYGEQLKEKQKFRFAYGISERQFRNLYKKASRMPGVTGDNMISLMEQRLDNTIYRMGFAISRAQARQMVTHAYFFINGKPVNIPSMCVSVNDVITTKNKKGIQNLIRHNMSTSQSARGSWLTIDDEKLSATVNILPVTTDIQPVGNIQNVVEYYSRNA</sequence>
<gene>
    <name evidence="1" type="primary">rpsD</name>
    <name type="ordered locus">TDE_1943</name>
</gene>
<organism>
    <name type="scientific">Treponema denticola (strain ATCC 35405 / DSM 14222 / CIP 103919 / JCM 8153 / KCTC 15104)</name>
    <dbReference type="NCBI Taxonomy" id="243275"/>
    <lineage>
        <taxon>Bacteria</taxon>
        <taxon>Pseudomonadati</taxon>
        <taxon>Spirochaetota</taxon>
        <taxon>Spirochaetia</taxon>
        <taxon>Spirochaetales</taxon>
        <taxon>Treponemataceae</taxon>
        <taxon>Treponema</taxon>
    </lineage>
</organism>
<evidence type="ECO:0000255" key="1">
    <source>
        <dbReference type="HAMAP-Rule" id="MF_01306"/>
    </source>
</evidence>
<evidence type="ECO:0000256" key="2">
    <source>
        <dbReference type="SAM" id="MobiDB-lite"/>
    </source>
</evidence>
<evidence type="ECO:0000305" key="3"/>
<proteinExistence type="inferred from homology"/>
<accession>Q73LC2</accession>
<dbReference type="EMBL" id="AE017226">
    <property type="protein sequence ID" value="AAS12457.1"/>
    <property type="molecule type" value="Genomic_DNA"/>
</dbReference>
<dbReference type="RefSeq" id="NP_972546.1">
    <property type="nucleotide sequence ID" value="NC_002967.9"/>
</dbReference>
<dbReference type="RefSeq" id="WP_002669771.1">
    <property type="nucleotide sequence ID" value="NC_002967.9"/>
</dbReference>
<dbReference type="SMR" id="Q73LC2"/>
<dbReference type="STRING" id="243275.TDE_1943"/>
<dbReference type="PaxDb" id="243275-TDE_1943"/>
<dbReference type="GeneID" id="2740183"/>
<dbReference type="KEGG" id="tde:TDE_1943"/>
<dbReference type="PATRIC" id="fig|243275.7.peg.1835"/>
<dbReference type="eggNOG" id="COG0522">
    <property type="taxonomic scope" value="Bacteria"/>
</dbReference>
<dbReference type="HOGENOM" id="CLU_092403_0_4_12"/>
<dbReference type="OrthoDB" id="9803672at2"/>
<dbReference type="Proteomes" id="UP000008212">
    <property type="component" value="Chromosome"/>
</dbReference>
<dbReference type="GO" id="GO:0015935">
    <property type="term" value="C:small ribosomal subunit"/>
    <property type="evidence" value="ECO:0007669"/>
    <property type="project" value="InterPro"/>
</dbReference>
<dbReference type="GO" id="GO:0019843">
    <property type="term" value="F:rRNA binding"/>
    <property type="evidence" value="ECO:0007669"/>
    <property type="project" value="UniProtKB-UniRule"/>
</dbReference>
<dbReference type="GO" id="GO:0003735">
    <property type="term" value="F:structural constituent of ribosome"/>
    <property type="evidence" value="ECO:0007669"/>
    <property type="project" value="InterPro"/>
</dbReference>
<dbReference type="GO" id="GO:0042274">
    <property type="term" value="P:ribosomal small subunit biogenesis"/>
    <property type="evidence" value="ECO:0007669"/>
    <property type="project" value="TreeGrafter"/>
</dbReference>
<dbReference type="GO" id="GO:0006412">
    <property type="term" value="P:translation"/>
    <property type="evidence" value="ECO:0007669"/>
    <property type="project" value="UniProtKB-UniRule"/>
</dbReference>
<dbReference type="CDD" id="cd00165">
    <property type="entry name" value="S4"/>
    <property type="match status" value="1"/>
</dbReference>
<dbReference type="FunFam" id="3.10.290.10:FF:000001">
    <property type="entry name" value="30S ribosomal protein S4"/>
    <property type="match status" value="1"/>
</dbReference>
<dbReference type="Gene3D" id="1.10.1050.10">
    <property type="entry name" value="Ribosomal Protein S4 Delta 41, Chain A, domain 1"/>
    <property type="match status" value="1"/>
</dbReference>
<dbReference type="Gene3D" id="3.10.290.10">
    <property type="entry name" value="RNA-binding S4 domain"/>
    <property type="match status" value="1"/>
</dbReference>
<dbReference type="HAMAP" id="MF_01306_B">
    <property type="entry name" value="Ribosomal_uS4_B"/>
    <property type="match status" value="1"/>
</dbReference>
<dbReference type="InterPro" id="IPR022801">
    <property type="entry name" value="Ribosomal_uS4"/>
</dbReference>
<dbReference type="InterPro" id="IPR005709">
    <property type="entry name" value="Ribosomal_uS4_bac-type"/>
</dbReference>
<dbReference type="InterPro" id="IPR018079">
    <property type="entry name" value="Ribosomal_uS4_CS"/>
</dbReference>
<dbReference type="InterPro" id="IPR001912">
    <property type="entry name" value="Ribosomal_uS4_N"/>
</dbReference>
<dbReference type="InterPro" id="IPR002942">
    <property type="entry name" value="S4_RNA-bd"/>
</dbReference>
<dbReference type="InterPro" id="IPR036986">
    <property type="entry name" value="S4_RNA-bd_sf"/>
</dbReference>
<dbReference type="NCBIfam" id="NF003717">
    <property type="entry name" value="PRK05327.1"/>
    <property type="match status" value="1"/>
</dbReference>
<dbReference type="NCBIfam" id="TIGR01017">
    <property type="entry name" value="rpsD_bact"/>
    <property type="match status" value="1"/>
</dbReference>
<dbReference type="PANTHER" id="PTHR11831">
    <property type="entry name" value="30S 40S RIBOSOMAL PROTEIN"/>
    <property type="match status" value="1"/>
</dbReference>
<dbReference type="PANTHER" id="PTHR11831:SF4">
    <property type="entry name" value="SMALL RIBOSOMAL SUBUNIT PROTEIN US4M"/>
    <property type="match status" value="1"/>
</dbReference>
<dbReference type="Pfam" id="PF00163">
    <property type="entry name" value="Ribosomal_S4"/>
    <property type="match status" value="1"/>
</dbReference>
<dbReference type="Pfam" id="PF01479">
    <property type="entry name" value="S4"/>
    <property type="match status" value="1"/>
</dbReference>
<dbReference type="SMART" id="SM01390">
    <property type="entry name" value="Ribosomal_S4"/>
    <property type="match status" value="1"/>
</dbReference>
<dbReference type="SMART" id="SM00363">
    <property type="entry name" value="S4"/>
    <property type="match status" value="1"/>
</dbReference>
<dbReference type="SUPFAM" id="SSF55174">
    <property type="entry name" value="Alpha-L RNA-binding motif"/>
    <property type="match status" value="1"/>
</dbReference>
<dbReference type="PROSITE" id="PS00632">
    <property type="entry name" value="RIBOSOMAL_S4"/>
    <property type="match status" value="1"/>
</dbReference>
<dbReference type="PROSITE" id="PS50889">
    <property type="entry name" value="S4"/>
    <property type="match status" value="1"/>
</dbReference>
<keyword id="KW-1185">Reference proteome</keyword>
<keyword id="KW-0687">Ribonucleoprotein</keyword>
<keyword id="KW-0689">Ribosomal protein</keyword>
<keyword id="KW-0694">RNA-binding</keyword>
<keyword id="KW-0699">rRNA-binding</keyword>
<protein>
    <recommendedName>
        <fullName evidence="1">Small ribosomal subunit protein uS4</fullName>
    </recommendedName>
    <alternativeName>
        <fullName evidence="3">30S ribosomal protein S4</fullName>
    </alternativeName>
</protein>
<comment type="function">
    <text evidence="1">One of the primary rRNA binding proteins, it binds directly to 16S rRNA where it nucleates assembly of the body of the 30S subunit.</text>
</comment>
<comment type="function">
    <text evidence="1">With S5 and S12 plays an important role in translational accuracy.</text>
</comment>
<comment type="subunit">
    <text evidence="1">Part of the 30S ribosomal subunit. Contacts protein S5. The interaction surface between S4 and S5 is involved in control of translational fidelity.</text>
</comment>
<comment type="similarity">
    <text evidence="1">Belongs to the universal ribosomal protein uS4 family.</text>
</comment>
<name>RS4_TREDE</name>
<feature type="chain" id="PRO_0000132485" description="Small ribosomal subunit protein uS4">
    <location>
        <begin position="1"/>
        <end position="206"/>
    </location>
</feature>
<feature type="domain" description="S4 RNA-binding" evidence="1">
    <location>
        <begin position="95"/>
        <end position="157"/>
    </location>
</feature>
<feature type="region of interest" description="Disordered" evidence="2">
    <location>
        <begin position="25"/>
        <end position="49"/>
    </location>
</feature>
<feature type="compositionally biased region" description="Basic and acidic residues" evidence="2">
    <location>
        <begin position="25"/>
        <end position="39"/>
    </location>
</feature>